<name>Y1766_BRUA4</name>
<keyword id="KW-1185">Reference proteome</keyword>
<comment type="similarity">
    <text evidence="1">Belongs to the UPF0303 family.</text>
</comment>
<organism>
    <name type="scientific">Brucella anthropi (strain ATCC 49188 / DSM 6882 / CCUG 24695 / JCM 21032 / LMG 3331 / NBRC 15819 / NCTC 12168 / Alc 37)</name>
    <name type="common">Ochrobactrum anthropi</name>
    <dbReference type="NCBI Taxonomy" id="439375"/>
    <lineage>
        <taxon>Bacteria</taxon>
        <taxon>Pseudomonadati</taxon>
        <taxon>Pseudomonadota</taxon>
        <taxon>Alphaproteobacteria</taxon>
        <taxon>Hyphomicrobiales</taxon>
        <taxon>Brucellaceae</taxon>
        <taxon>Brucella/Ochrobactrum group</taxon>
        <taxon>Brucella</taxon>
    </lineage>
</organism>
<protein>
    <recommendedName>
        <fullName evidence="1">UPF0303 protein Oant_1766</fullName>
    </recommendedName>
</protein>
<accession>A6WZS8</accession>
<proteinExistence type="inferred from homology"/>
<dbReference type="EMBL" id="CP000758">
    <property type="protein sequence ID" value="ABS14482.1"/>
    <property type="molecule type" value="Genomic_DNA"/>
</dbReference>
<dbReference type="RefSeq" id="WP_012091768.1">
    <property type="nucleotide sequence ID" value="NC_009667.1"/>
</dbReference>
<dbReference type="SMR" id="A6WZS8"/>
<dbReference type="STRING" id="439375.Oant_1766"/>
<dbReference type="KEGG" id="oan:Oant_1766"/>
<dbReference type="PATRIC" id="fig|439375.7.peg.1868"/>
<dbReference type="eggNOG" id="COG4702">
    <property type="taxonomic scope" value="Bacteria"/>
</dbReference>
<dbReference type="HOGENOM" id="CLU_101036_2_2_5"/>
<dbReference type="PhylomeDB" id="A6WZS8"/>
<dbReference type="Proteomes" id="UP000002301">
    <property type="component" value="Chromosome 1"/>
</dbReference>
<dbReference type="Gene3D" id="3.30.450.150">
    <property type="entry name" value="Haem-degrading domain"/>
    <property type="match status" value="1"/>
</dbReference>
<dbReference type="HAMAP" id="MF_00761">
    <property type="entry name" value="UPF0303"/>
    <property type="match status" value="1"/>
</dbReference>
<dbReference type="InterPro" id="IPR005624">
    <property type="entry name" value="PduO/GlcC-like"/>
</dbReference>
<dbReference type="InterPro" id="IPR038084">
    <property type="entry name" value="PduO/GlcC-like_sf"/>
</dbReference>
<dbReference type="InterPro" id="IPR010371">
    <property type="entry name" value="YBR137W-like"/>
</dbReference>
<dbReference type="NCBIfam" id="NF002693">
    <property type="entry name" value="PRK02487.1-2"/>
    <property type="match status" value="1"/>
</dbReference>
<dbReference type="NCBIfam" id="NF002696">
    <property type="entry name" value="PRK02487.1-5"/>
    <property type="match status" value="1"/>
</dbReference>
<dbReference type="PANTHER" id="PTHR28255">
    <property type="match status" value="1"/>
</dbReference>
<dbReference type="PANTHER" id="PTHR28255:SF1">
    <property type="entry name" value="UPF0303 PROTEIN YBR137W"/>
    <property type="match status" value="1"/>
</dbReference>
<dbReference type="Pfam" id="PF03928">
    <property type="entry name" value="HbpS-like"/>
    <property type="match status" value="1"/>
</dbReference>
<dbReference type="PIRSF" id="PIRSF008757">
    <property type="entry name" value="UCP008757"/>
    <property type="match status" value="1"/>
</dbReference>
<dbReference type="SUPFAM" id="SSF143744">
    <property type="entry name" value="GlcG-like"/>
    <property type="match status" value="1"/>
</dbReference>
<gene>
    <name type="ordered locus">Oant_1766</name>
</gene>
<evidence type="ECO:0000255" key="1">
    <source>
        <dbReference type="HAMAP-Rule" id="MF_00761"/>
    </source>
</evidence>
<reference key="1">
    <citation type="journal article" date="2011" name="J. Bacteriol.">
        <title>Genome of Ochrobactrum anthropi ATCC 49188 T, a versatile opportunistic pathogen and symbiont of several eukaryotic hosts.</title>
        <authorList>
            <person name="Chain P.S."/>
            <person name="Lang D.M."/>
            <person name="Comerci D.J."/>
            <person name="Malfatti S.A."/>
            <person name="Vergez L.M."/>
            <person name="Shin M."/>
            <person name="Ugalde R.A."/>
            <person name="Garcia E."/>
            <person name="Tolmasky M.E."/>
        </authorList>
    </citation>
    <scope>NUCLEOTIDE SEQUENCE [LARGE SCALE GENOMIC DNA]</scope>
    <source>
        <strain>ATCC 49188 / DSM 6882 / CCUG 24695 / JCM 21032 / LMG 3331 / NBRC 15819 / NCTC 12168 / Alc 37</strain>
    </source>
</reference>
<feature type="chain" id="PRO_1000046748" description="UPF0303 protein Oant_1766">
    <location>
        <begin position="1"/>
        <end position="169"/>
    </location>
</feature>
<sequence length="169" mass="18745">MAQGDDSKQAIAQIIRQEQALIFPSFDENEAFALGHRIRDIAVKEKLGIATEISLWDRQLFYATTAGSTVDNQEWLRRKFNVVRRFHASTYRLVLEQNRDDRMFALHKALNVEDYALAGGGFPIRVAGAGVIGAVIVSGLPQREDHNLVIRAVAEHLGQDPVALALPAV</sequence>